<reference key="1">
    <citation type="journal article" date="2006" name="BMC Genomics">
        <title>Comparative genome analysis: selection pressure on the Borrelia vls cassettes is essential for infectivity.</title>
        <authorList>
            <person name="Gloeckner G."/>
            <person name="Schulte-Spechtel U."/>
            <person name="Schilhabel M."/>
            <person name="Felder M."/>
            <person name="Suehnel J."/>
            <person name="Wilske B."/>
            <person name="Platzer M."/>
        </authorList>
    </citation>
    <scope>NUCLEOTIDE SEQUENCE [LARGE SCALE GENOMIC DNA]</scope>
    <source>
        <strain>PKo</strain>
    </source>
</reference>
<reference key="2">
    <citation type="journal article" date="2011" name="J. Bacteriol.">
        <title>Whole-genome sequences of two Borrelia afzelii and two Borrelia garinii Lyme disease agent isolates.</title>
        <authorList>
            <person name="Casjens S.R."/>
            <person name="Mongodin E.F."/>
            <person name="Qiu W.G."/>
            <person name="Dunn J.J."/>
            <person name="Luft B.J."/>
            <person name="Fraser-Liggett C.M."/>
            <person name="Schutzer S.E."/>
        </authorList>
    </citation>
    <scope>NUCLEOTIDE SEQUENCE [LARGE SCALE GENOMIC DNA]</scope>
    <source>
        <strain>PKo</strain>
    </source>
</reference>
<gene>
    <name evidence="1" type="primary">rplX</name>
    <name type="ordered locus">BAPKO_0517</name>
    <name type="ordered locus">BafPKo_0506</name>
</gene>
<comment type="function">
    <text evidence="1">One of two assembly initiator proteins, it binds directly to the 5'-end of the 23S rRNA, where it nucleates assembly of the 50S subunit.</text>
</comment>
<comment type="function">
    <text evidence="1">One of the proteins that surrounds the polypeptide exit tunnel on the outside of the subunit.</text>
</comment>
<comment type="subunit">
    <text evidence="1">Part of the 50S ribosomal subunit.</text>
</comment>
<comment type="similarity">
    <text evidence="1">Belongs to the universal ribosomal protein uL24 family.</text>
</comment>
<dbReference type="EMBL" id="CP000395">
    <property type="protein sequence ID" value="ABH01760.1"/>
    <property type="molecule type" value="Genomic_DNA"/>
</dbReference>
<dbReference type="EMBL" id="CP002933">
    <property type="protein sequence ID" value="AEL69714.1"/>
    <property type="molecule type" value="Genomic_DNA"/>
</dbReference>
<dbReference type="RefSeq" id="WP_004789682.1">
    <property type="nucleotide sequence ID" value="NZ_CP160066.1"/>
</dbReference>
<dbReference type="SMR" id="Q0SN18"/>
<dbReference type="STRING" id="29518.BLA32_01815"/>
<dbReference type="GeneID" id="77265336"/>
<dbReference type="KEGG" id="baf:BAPKO_0517"/>
<dbReference type="KEGG" id="bafz:BafPKo_0506"/>
<dbReference type="PATRIC" id="fig|390236.22.peg.486"/>
<dbReference type="eggNOG" id="COG0198">
    <property type="taxonomic scope" value="Bacteria"/>
</dbReference>
<dbReference type="HOGENOM" id="CLU_093315_2_3_12"/>
<dbReference type="OrthoDB" id="9807419at2"/>
<dbReference type="Proteomes" id="UP000005216">
    <property type="component" value="Chromosome"/>
</dbReference>
<dbReference type="GO" id="GO:1990904">
    <property type="term" value="C:ribonucleoprotein complex"/>
    <property type="evidence" value="ECO:0007669"/>
    <property type="project" value="UniProtKB-KW"/>
</dbReference>
<dbReference type="GO" id="GO:0005840">
    <property type="term" value="C:ribosome"/>
    <property type="evidence" value="ECO:0007669"/>
    <property type="project" value="UniProtKB-KW"/>
</dbReference>
<dbReference type="GO" id="GO:0019843">
    <property type="term" value="F:rRNA binding"/>
    <property type="evidence" value="ECO:0007669"/>
    <property type="project" value="UniProtKB-UniRule"/>
</dbReference>
<dbReference type="GO" id="GO:0003735">
    <property type="term" value="F:structural constituent of ribosome"/>
    <property type="evidence" value="ECO:0007669"/>
    <property type="project" value="InterPro"/>
</dbReference>
<dbReference type="GO" id="GO:0006412">
    <property type="term" value="P:translation"/>
    <property type="evidence" value="ECO:0007669"/>
    <property type="project" value="UniProtKB-UniRule"/>
</dbReference>
<dbReference type="CDD" id="cd06089">
    <property type="entry name" value="KOW_RPL26"/>
    <property type="match status" value="1"/>
</dbReference>
<dbReference type="Gene3D" id="2.30.30.30">
    <property type="match status" value="1"/>
</dbReference>
<dbReference type="HAMAP" id="MF_01326_B">
    <property type="entry name" value="Ribosomal_uL24_B"/>
    <property type="match status" value="1"/>
</dbReference>
<dbReference type="InterPro" id="IPR005824">
    <property type="entry name" value="KOW"/>
</dbReference>
<dbReference type="InterPro" id="IPR014722">
    <property type="entry name" value="Rib_uL2_dom2"/>
</dbReference>
<dbReference type="InterPro" id="IPR003256">
    <property type="entry name" value="Ribosomal_uL24"/>
</dbReference>
<dbReference type="InterPro" id="IPR005825">
    <property type="entry name" value="Ribosomal_uL24_CS"/>
</dbReference>
<dbReference type="InterPro" id="IPR041988">
    <property type="entry name" value="Ribosomal_uL24_KOW"/>
</dbReference>
<dbReference type="InterPro" id="IPR008991">
    <property type="entry name" value="Translation_prot_SH3-like_sf"/>
</dbReference>
<dbReference type="NCBIfam" id="TIGR01079">
    <property type="entry name" value="rplX_bact"/>
    <property type="match status" value="1"/>
</dbReference>
<dbReference type="PANTHER" id="PTHR12903">
    <property type="entry name" value="MITOCHONDRIAL RIBOSOMAL PROTEIN L24"/>
    <property type="match status" value="1"/>
</dbReference>
<dbReference type="Pfam" id="PF00467">
    <property type="entry name" value="KOW"/>
    <property type="match status" value="1"/>
</dbReference>
<dbReference type="Pfam" id="PF17136">
    <property type="entry name" value="ribosomal_L24"/>
    <property type="match status" value="1"/>
</dbReference>
<dbReference type="SMART" id="SM00739">
    <property type="entry name" value="KOW"/>
    <property type="match status" value="1"/>
</dbReference>
<dbReference type="SUPFAM" id="SSF50104">
    <property type="entry name" value="Translation proteins SH3-like domain"/>
    <property type="match status" value="1"/>
</dbReference>
<dbReference type="PROSITE" id="PS01108">
    <property type="entry name" value="RIBOSOMAL_L24"/>
    <property type="match status" value="1"/>
</dbReference>
<feature type="chain" id="PRO_1000052185" description="Large ribosomal subunit protein uL24">
    <location>
        <begin position="1"/>
        <end position="101"/>
    </location>
</feature>
<protein>
    <recommendedName>
        <fullName evidence="1">Large ribosomal subunit protein uL24</fullName>
    </recommendedName>
    <alternativeName>
        <fullName evidence="2">50S ribosomal protein L24</fullName>
    </alternativeName>
</protein>
<organism>
    <name type="scientific">Borreliella afzelii (strain PKo)</name>
    <name type="common">Borrelia afzelii</name>
    <dbReference type="NCBI Taxonomy" id="390236"/>
    <lineage>
        <taxon>Bacteria</taxon>
        <taxon>Pseudomonadati</taxon>
        <taxon>Spirochaetota</taxon>
        <taxon>Spirochaetia</taxon>
        <taxon>Spirochaetales</taxon>
        <taxon>Borreliaceae</taxon>
        <taxon>Borreliella</taxon>
    </lineage>
</organism>
<proteinExistence type="inferred from homology"/>
<name>RL24_BORAP</name>
<keyword id="KW-0687">Ribonucleoprotein</keyword>
<keyword id="KW-0689">Ribosomal protein</keyword>
<keyword id="KW-0694">RNA-binding</keyword>
<keyword id="KW-0699">rRNA-binding</keyword>
<evidence type="ECO:0000255" key="1">
    <source>
        <dbReference type="HAMAP-Rule" id="MF_01326"/>
    </source>
</evidence>
<evidence type="ECO:0000305" key="2"/>
<sequence>MKTKLKIGDSVKILSGKDKGRIGKIASINRKKNKVIVESCNMVKKVIKARTPQEKGKIIDKEAAIDISNVMIFVKGTSSRLGIRFENNEKIRYLKKNGQRI</sequence>
<accession>Q0SN18</accession>
<accession>G0ISD3</accession>